<name>CP2A6_HUMAN</name>
<sequence length="494" mass="56517">MLASGMLLVALLVCLTVMVLMSVWQQRKSKGKLPPGPTPLPFIGNYLQLNTEQMYNSLMKISERYGPVFTIHLGPRRVVVLCGHDAVREALVDQAEEFSGRGEQATFDWVFKGYGVVFSNGERAKQLRRFSIATLRDFGVGKRGIEERIQEEAGFLIDALRGTGGANIDPTFFLSRTVSNVISSIVFGDRFDYKDKEFLSLLRMMLGIFQFTSTSTGQLYEMFSSVMKHLPGPQQQAFQLLQGLEDFIAKKVEHNQRTLDPNSPRDFIDSFLIRMQEEEKNPNTEFYLKNLVMTTLNLFIGGTETVSTTLRYGFLLLMKHPEVEAKVHEEIDRVIGKNRQPKFEDRAKMPYMEAVIHEIQRFGDVIPMSLARRVKKDTKFRDFFLPKGTEVYPMLGSVLRDPSFFSNPQDFNPQHFLNEKGQFKKSDAFVPFSIGKRNCFGEGLARMELFLFFTTVMQNFRLKSSQSPKDIDVSPKHVGFATIPRNYTMSFLPR</sequence>
<evidence type="ECO:0000269" key="1">
    <source>
    </source>
</evidence>
<evidence type="ECO:0000269" key="2">
    <source>
    </source>
</evidence>
<evidence type="ECO:0000269" key="3">
    <source>
    </source>
</evidence>
<evidence type="ECO:0000269" key="4">
    <source>
    </source>
</evidence>
<evidence type="ECO:0000269" key="5">
    <source>
    </source>
</evidence>
<evidence type="ECO:0000269" key="6">
    <source>
    </source>
</evidence>
<evidence type="ECO:0000269" key="7">
    <source>
    </source>
</evidence>
<evidence type="ECO:0000269" key="8">
    <source>
    </source>
</evidence>
<evidence type="ECO:0000269" key="9">
    <source>
    </source>
</evidence>
<evidence type="ECO:0000269" key="10">
    <source>
    </source>
</evidence>
<evidence type="ECO:0000269" key="11">
    <source>
    </source>
</evidence>
<evidence type="ECO:0000269" key="12">
    <source>
    </source>
</evidence>
<evidence type="ECO:0000269" key="13">
    <source>
    </source>
</evidence>
<evidence type="ECO:0000269" key="14">
    <source>
    </source>
</evidence>
<evidence type="ECO:0000269" key="15">
    <source>
    </source>
</evidence>
<evidence type="ECO:0000269" key="16">
    <source>
    </source>
</evidence>
<evidence type="ECO:0000269" key="17">
    <source>
    </source>
</evidence>
<evidence type="ECO:0000269" key="18">
    <source>
    </source>
</evidence>
<evidence type="ECO:0000269" key="19">
    <source>
    </source>
</evidence>
<evidence type="ECO:0000269" key="20">
    <source ref="4"/>
</evidence>
<evidence type="ECO:0000269" key="21">
    <source ref="6"/>
</evidence>
<evidence type="ECO:0000305" key="22"/>
<evidence type="ECO:0007829" key="23">
    <source>
        <dbReference type="PDB" id="2FDU"/>
    </source>
</evidence>
<evidence type="ECO:0007829" key="24">
    <source>
        <dbReference type="PDB" id="2FDV"/>
    </source>
</evidence>
<evidence type="ECO:0007829" key="25">
    <source>
        <dbReference type="PDB" id="2FDY"/>
    </source>
</evidence>
<evidence type="ECO:0007829" key="26">
    <source>
        <dbReference type="PDB" id="3T3Q"/>
    </source>
</evidence>
<evidence type="ECO:0007829" key="27">
    <source>
        <dbReference type="PDB" id="4RUI"/>
    </source>
</evidence>
<organism>
    <name type="scientific">Homo sapiens</name>
    <name type="common">Human</name>
    <dbReference type="NCBI Taxonomy" id="9606"/>
    <lineage>
        <taxon>Eukaryota</taxon>
        <taxon>Metazoa</taxon>
        <taxon>Chordata</taxon>
        <taxon>Craniata</taxon>
        <taxon>Vertebrata</taxon>
        <taxon>Euteleostomi</taxon>
        <taxon>Mammalia</taxon>
        <taxon>Eutheria</taxon>
        <taxon>Euarchontoglires</taxon>
        <taxon>Primates</taxon>
        <taxon>Haplorrhini</taxon>
        <taxon>Catarrhini</taxon>
        <taxon>Hominidae</taxon>
        <taxon>Homo</taxon>
    </lineage>
</organism>
<keyword id="KW-0002">3D-structure</keyword>
<keyword id="KW-0903">Direct protein sequencing</keyword>
<keyword id="KW-0256">Endoplasmic reticulum</keyword>
<keyword id="KW-0349">Heme</keyword>
<keyword id="KW-0408">Iron</keyword>
<keyword id="KW-0443">Lipid metabolism</keyword>
<keyword id="KW-0472">Membrane</keyword>
<keyword id="KW-0479">Metal-binding</keyword>
<keyword id="KW-0492">Microsome</keyword>
<keyword id="KW-0503">Monooxygenase</keyword>
<keyword id="KW-0521">NADP</keyword>
<keyword id="KW-0560">Oxidoreductase</keyword>
<keyword id="KW-1267">Proteomics identification</keyword>
<keyword id="KW-1185">Reference proteome</keyword>
<protein>
    <recommendedName>
        <fullName>Cytochrome P450 2A6</fullName>
        <ecNumber>1.14.14.-</ecNumber>
    </recommendedName>
    <alternativeName>
        <fullName>1,4-cineole 2-exo-monooxygenase</fullName>
    </alternativeName>
    <alternativeName>
        <fullName>CYPIIA6</fullName>
    </alternativeName>
    <alternativeName>
        <fullName>Coumarin 7-hydroxylase</fullName>
    </alternativeName>
    <alternativeName>
        <fullName>Cytochrome P450 IIA3</fullName>
    </alternativeName>
    <alternativeName>
        <fullName>Cytochrome P450(I)</fullName>
    </alternativeName>
</protein>
<reference key="1">
    <citation type="journal article" date="1989" name="Nucleic Acids Res.">
        <title>Close linkage of the human cytochrome P450IIA and P450IIB gene subfamilies: implications for the assignment of substrate specificity.</title>
        <authorList>
            <person name="Miles J.S."/>
            <person name="Bickmore W."/>
            <person name="Brook J.D."/>
            <person name="McLaren A.W."/>
            <person name="Meehan R."/>
            <person name="Wolf C.R."/>
        </authorList>
    </citation>
    <scope>NUCLEOTIDE SEQUENCE [MRNA]</scope>
    <scope>VARIANT ASN-29</scope>
    <source>
        <tissue>Liver</tissue>
    </source>
</reference>
<reference key="2">
    <citation type="journal article" date="1989" name="Nucleic Acids Res.">
        <title>cDNA and deduced amino acid sequences of human P450 IIA3 (CYP2A3).</title>
        <authorList>
            <person name="Yamano S."/>
            <person name="Nagata K."/>
            <person name="Yamazoe Y."/>
            <person name="Kato R."/>
            <person name="Gelboin H.V."/>
            <person name="Gonzalez F.J."/>
        </authorList>
    </citation>
    <scope>NUCLEOTIDE SEQUENCE [MRNA]</scope>
    <scope>VARIANT HIS-160</scope>
    <source>
        <tissue>Hepatocyte</tissue>
    </source>
</reference>
<reference key="3">
    <citation type="journal article" date="1990" name="Biochemistry">
        <title>The CYP2A3 gene product catalyzes coumarin 7-hydroxylation in human liver microsomes.</title>
        <authorList>
            <person name="Yamano S."/>
            <person name="Tatsuno J."/>
            <person name="Gonzalez F.J."/>
        </authorList>
    </citation>
    <scope>NUCLEOTIDE SEQUENCE [MRNA]</scope>
    <scope>VARIANT HIS-160</scope>
    <scope>CHARACTERIZATION OF VARIANT HIS-160</scope>
    <source>
        <tissue>Hepatocyte</tissue>
    </source>
</reference>
<reference key="4">
    <citation type="submission" date="1999-09" db="EMBL/GenBank/DDBJ databases">
        <title>Sequence of a new human cytochrome P450-2A6 cDNA.</title>
        <authorList>
            <person name="Zhuge J."/>
            <person name="Qian Y."/>
            <person name="Xie H."/>
            <person name="Yu Y."/>
        </authorList>
    </citation>
    <scope>NUCLEOTIDE SEQUENCE [MRNA]</scope>
    <scope>VARIANT VAL-479</scope>
    <source>
        <tissue>Liver</tissue>
    </source>
</reference>
<reference key="5">
    <citation type="journal article" date="2004" name="Nat. Genet.">
        <title>Complete sequencing and characterization of 21,243 full-length human cDNAs.</title>
        <authorList>
            <person name="Ota T."/>
            <person name="Suzuki Y."/>
            <person name="Nishikawa T."/>
            <person name="Otsuki T."/>
            <person name="Sugiyama T."/>
            <person name="Irie R."/>
            <person name="Wakamatsu A."/>
            <person name="Hayashi K."/>
            <person name="Sato H."/>
            <person name="Nagai K."/>
            <person name="Kimura K."/>
            <person name="Makita H."/>
            <person name="Sekine M."/>
            <person name="Obayashi M."/>
            <person name="Nishi T."/>
            <person name="Shibahara T."/>
            <person name="Tanaka T."/>
            <person name="Ishii S."/>
            <person name="Yamamoto J."/>
            <person name="Saito K."/>
            <person name="Kawai Y."/>
            <person name="Isono Y."/>
            <person name="Nakamura Y."/>
            <person name="Nagahari K."/>
            <person name="Murakami K."/>
            <person name="Yasuda T."/>
            <person name="Iwayanagi T."/>
            <person name="Wagatsuma M."/>
            <person name="Shiratori A."/>
            <person name="Sudo H."/>
            <person name="Hosoiri T."/>
            <person name="Kaku Y."/>
            <person name="Kodaira H."/>
            <person name="Kondo H."/>
            <person name="Sugawara M."/>
            <person name="Takahashi M."/>
            <person name="Kanda K."/>
            <person name="Yokoi T."/>
            <person name="Furuya T."/>
            <person name="Kikkawa E."/>
            <person name="Omura Y."/>
            <person name="Abe K."/>
            <person name="Kamihara K."/>
            <person name="Katsuta N."/>
            <person name="Sato K."/>
            <person name="Tanikawa M."/>
            <person name="Yamazaki M."/>
            <person name="Ninomiya K."/>
            <person name="Ishibashi T."/>
            <person name="Yamashita H."/>
            <person name="Murakawa K."/>
            <person name="Fujimori K."/>
            <person name="Tanai H."/>
            <person name="Kimata M."/>
            <person name="Watanabe M."/>
            <person name="Hiraoka S."/>
            <person name="Chiba Y."/>
            <person name="Ishida S."/>
            <person name="Ono Y."/>
            <person name="Takiguchi S."/>
            <person name="Watanabe S."/>
            <person name="Yosida M."/>
            <person name="Hotuta T."/>
            <person name="Kusano J."/>
            <person name="Kanehori K."/>
            <person name="Takahashi-Fujii A."/>
            <person name="Hara H."/>
            <person name="Tanase T.-O."/>
            <person name="Nomura Y."/>
            <person name="Togiya S."/>
            <person name="Komai F."/>
            <person name="Hara R."/>
            <person name="Takeuchi K."/>
            <person name="Arita M."/>
            <person name="Imose N."/>
            <person name="Musashino K."/>
            <person name="Yuuki H."/>
            <person name="Oshima A."/>
            <person name="Sasaki N."/>
            <person name="Aotsuka S."/>
            <person name="Yoshikawa Y."/>
            <person name="Matsunawa H."/>
            <person name="Ichihara T."/>
            <person name="Shiohata N."/>
            <person name="Sano S."/>
            <person name="Moriya S."/>
            <person name="Momiyama H."/>
            <person name="Satoh N."/>
            <person name="Takami S."/>
            <person name="Terashima Y."/>
            <person name="Suzuki O."/>
            <person name="Nakagawa S."/>
            <person name="Senoh A."/>
            <person name="Mizoguchi H."/>
            <person name="Goto Y."/>
            <person name="Shimizu F."/>
            <person name="Wakebe H."/>
            <person name="Hishigaki H."/>
            <person name="Watanabe T."/>
            <person name="Sugiyama A."/>
            <person name="Takemoto M."/>
            <person name="Kawakami B."/>
            <person name="Yamazaki M."/>
            <person name="Watanabe K."/>
            <person name="Kumagai A."/>
            <person name="Itakura S."/>
            <person name="Fukuzumi Y."/>
            <person name="Fujimori Y."/>
            <person name="Komiyama M."/>
            <person name="Tashiro H."/>
            <person name="Tanigami A."/>
            <person name="Fujiwara T."/>
            <person name="Ono T."/>
            <person name="Yamada K."/>
            <person name="Fujii Y."/>
            <person name="Ozaki K."/>
            <person name="Hirao M."/>
            <person name="Ohmori Y."/>
            <person name="Kawabata A."/>
            <person name="Hikiji T."/>
            <person name="Kobatake N."/>
            <person name="Inagaki H."/>
            <person name="Ikema Y."/>
            <person name="Okamoto S."/>
            <person name="Okitani R."/>
            <person name="Kawakami T."/>
            <person name="Noguchi S."/>
            <person name="Itoh T."/>
            <person name="Shigeta K."/>
            <person name="Senba T."/>
            <person name="Matsumura K."/>
            <person name="Nakajima Y."/>
            <person name="Mizuno T."/>
            <person name="Morinaga M."/>
            <person name="Sasaki M."/>
            <person name="Togashi T."/>
            <person name="Oyama M."/>
            <person name="Hata H."/>
            <person name="Watanabe M."/>
            <person name="Komatsu T."/>
            <person name="Mizushima-Sugano J."/>
            <person name="Satoh T."/>
            <person name="Shirai Y."/>
            <person name="Takahashi Y."/>
            <person name="Nakagawa K."/>
            <person name="Okumura K."/>
            <person name="Nagase T."/>
            <person name="Nomura N."/>
            <person name="Kikuchi H."/>
            <person name="Masuho Y."/>
            <person name="Yamashita R."/>
            <person name="Nakai K."/>
            <person name="Yada T."/>
            <person name="Nakamura Y."/>
            <person name="Ohara O."/>
            <person name="Isogai T."/>
            <person name="Sugano S."/>
        </authorList>
    </citation>
    <scope>NUCLEOTIDE SEQUENCE [LARGE SCALE MRNA]</scope>
    <source>
        <tissue>Mammary gland</tissue>
    </source>
</reference>
<reference key="6">
    <citation type="submission" date="2007-09" db="EMBL/GenBank/DDBJ databases">
        <authorList>
            <consortium name="NIEHS SNPs program"/>
        </authorList>
    </citation>
    <scope>NUCLEOTIDE SEQUENCE [GENOMIC DNA]</scope>
    <scope>VARIANT PHE-392</scope>
</reference>
<reference key="7">
    <citation type="journal article" date="2004" name="Nature">
        <title>The DNA sequence and biology of human chromosome 19.</title>
        <authorList>
            <person name="Grimwood J."/>
            <person name="Gordon L.A."/>
            <person name="Olsen A.S."/>
            <person name="Terry A."/>
            <person name="Schmutz J."/>
            <person name="Lamerdin J.E."/>
            <person name="Hellsten U."/>
            <person name="Goodstein D."/>
            <person name="Couronne O."/>
            <person name="Tran-Gyamfi M."/>
            <person name="Aerts A."/>
            <person name="Altherr M."/>
            <person name="Ashworth L."/>
            <person name="Bajorek E."/>
            <person name="Black S."/>
            <person name="Branscomb E."/>
            <person name="Caenepeel S."/>
            <person name="Carrano A.V."/>
            <person name="Caoile C."/>
            <person name="Chan Y.M."/>
            <person name="Christensen M."/>
            <person name="Cleland C.A."/>
            <person name="Copeland A."/>
            <person name="Dalin E."/>
            <person name="Dehal P."/>
            <person name="Denys M."/>
            <person name="Detter J.C."/>
            <person name="Escobar J."/>
            <person name="Flowers D."/>
            <person name="Fotopulos D."/>
            <person name="Garcia C."/>
            <person name="Georgescu A.M."/>
            <person name="Glavina T."/>
            <person name="Gomez M."/>
            <person name="Gonzales E."/>
            <person name="Groza M."/>
            <person name="Hammon N."/>
            <person name="Hawkins T."/>
            <person name="Haydu L."/>
            <person name="Ho I."/>
            <person name="Huang W."/>
            <person name="Israni S."/>
            <person name="Jett J."/>
            <person name="Kadner K."/>
            <person name="Kimball H."/>
            <person name="Kobayashi A."/>
            <person name="Larionov V."/>
            <person name="Leem S.-H."/>
            <person name="Lopez F."/>
            <person name="Lou Y."/>
            <person name="Lowry S."/>
            <person name="Malfatti S."/>
            <person name="Martinez D."/>
            <person name="McCready P.M."/>
            <person name="Medina C."/>
            <person name="Morgan J."/>
            <person name="Nelson K."/>
            <person name="Nolan M."/>
            <person name="Ovcharenko I."/>
            <person name="Pitluck S."/>
            <person name="Pollard M."/>
            <person name="Popkie A.P."/>
            <person name="Predki P."/>
            <person name="Quan G."/>
            <person name="Ramirez L."/>
            <person name="Rash S."/>
            <person name="Retterer J."/>
            <person name="Rodriguez A."/>
            <person name="Rogers S."/>
            <person name="Salamov A."/>
            <person name="Salazar A."/>
            <person name="She X."/>
            <person name="Smith D."/>
            <person name="Slezak T."/>
            <person name="Solovyev V."/>
            <person name="Thayer N."/>
            <person name="Tice H."/>
            <person name="Tsai M."/>
            <person name="Ustaszewska A."/>
            <person name="Vo N."/>
            <person name="Wagner M."/>
            <person name="Wheeler J."/>
            <person name="Wu K."/>
            <person name="Xie G."/>
            <person name="Yang J."/>
            <person name="Dubchak I."/>
            <person name="Furey T.S."/>
            <person name="DeJong P."/>
            <person name="Dickson M."/>
            <person name="Gordon D."/>
            <person name="Eichler E.E."/>
            <person name="Pennacchio L.A."/>
            <person name="Richardson P."/>
            <person name="Stubbs L."/>
            <person name="Rokhsar D.S."/>
            <person name="Myers R.M."/>
            <person name="Rubin E.M."/>
            <person name="Lucas S.M."/>
        </authorList>
    </citation>
    <scope>NUCLEOTIDE SEQUENCE [LARGE SCALE GENOMIC DNA]</scope>
</reference>
<reference key="8">
    <citation type="submission" date="2005-07" db="EMBL/GenBank/DDBJ databases">
        <authorList>
            <person name="Mural R.J."/>
            <person name="Istrail S."/>
            <person name="Sutton G.G."/>
            <person name="Florea L."/>
            <person name="Halpern A.L."/>
            <person name="Mobarry C.M."/>
            <person name="Lippert R."/>
            <person name="Walenz B."/>
            <person name="Shatkay H."/>
            <person name="Dew I."/>
            <person name="Miller J.R."/>
            <person name="Flanigan M.J."/>
            <person name="Edwards N.J."/>
            <person name="Bolanos R."/>
            <person name="Fasulo D."/>
            <person name="Halldorsson B.V."/>
            <person name="Hannenhalli S."/>
            <person name="Turner R."/>
            <person name="Yooseph S."/>
            <person name="Lu F."/>
            <person name="Nusskern D.R."/>
            <person name="Shue B.C."/>
            <person name="Zheng X.H."/>
            <person name="Zhong F."/>
            <person name="Delcher A.L."/>
            <person name="Huson D.H."/>
            <person name="Kravitz S.A."/>
            <person name="Mouchard L."/>
            <person name="Reinert K."/>
            <person name="Remington K.A."/>
            <person name="Clark A.G."/>
            <person name="Waterman M.S."/>
            <person name="Eichler E.E."/>
            <person name="Adams M.D."/>
            <person name="Hunkapiller M.W."/>
            <person name="Myers E.W."/>
            <person name="Venter J.C."/>
        </authorList>
    </citation>
    <scope>NUCLEOTIDE SEQUENCE [LARGE SCALE GENOMIC DNA]</scope>
</reference>
<reference key="9">
    <citation type="journal article" date="2004" name="Genome Res.">
        <title>The status, quality, and expansion of the NIH full-length cDNA project: the Mammalian Gene Collection (MGC).</title>
        <authorList>
            <consortium name="The MGC Project Team"/>
        </authorList>
    </citation>
    <scope>NUCLEOTIDE SEQUENCE [LARGE SCALE MRNA]</scope>
    <scope>VARIANTS HIS-160 AND ARG-476</scope>
</reference>
<reference key="10">
    <citation type="journal article" date="1991" name="Eur. J. Biochem.">
        <title>Isolation and characterization of a cytochrome P450 of the IIA subfamily from human liver microsomes.</title>
        <authorList>
            <person name="Maurice M."/>
            <person name="Emiliani S."/>
            <person name="Dalet-Beluche I."/>
            <person name="Derancourt J."/>
            <person name="Lange R."/>
        </authorList>
    </citation>
    <scope>PROTEIN SEQUENCE OF 1-20</scope>
    <scope>FUNCTION</scope>
    <scope>SUBCELLULAR LOCATION</scope>
    <scope>INDUCTION</scope>
    <scope>TISSUE SPECIFICITY</scope>
</reference>
<reference key="11">
    <citation type="journal article" date="1991" name="Mol. Pharmacol.">
        <title>Purification and characterization of human liver microsomal cytochrome P-450 2A6.</title>
        <authorList>
            <person name="Yun C.H."/>
            <person name="Shimada T."/>
            <person name="Guengerich F.P."/>
        </authorList>
    </citation>
    <scope>PROTEIN SEQUENCE OF 1-13</scope>
    <scope>FUNCTION</scope>
    <scope>SUBCELLULAR LOCATION</scope>
    <scope>INDUCTION</scope>
    <scope>TISSUE SPECIFICITY</scope>
</reference>
<reference key="12">
    <citation type="journal article" date="2001" name="J. Biol. Chem.">
        <title>CYP2A6*6, a novel polymorphism in cytochrome p450 2A6, has a single amino acid substitution (R128Q) that inactivates enzymatic activity.</title>
        <authorList>
            <person name="Kitagawa K."/>
            <person name="Kunugita N."/>
            <person name="Kitagawa M."/>
            <person name="Kawamoto T."/>
        </authorList>
    </citation>
    <scope>NUCLEOTIDE SEQUENCE [GENOMIC DNA] OF 116-164</scope>
    <scope>VARIANT GLN-128</scope>
</reference>
<reference key="13">
    <citation type="journal article" date="1985" name="Proc. Natl. Acad. Sci. U.S.A.">
        <title>Isolation and sequence of a human cytochrome P-450 cDNA clone.</title>
        <authorList>
            <person name="Phillips I.R."/>
            <person name="Shephard E.A."/>
            <person name="Ashworth A."/>
            <person name="Rabin B.R."/>
        </authorList>
    </citation>
    <scope>PRELIMINARY NUCLEOTIDE SEQUENCE [MRNA] OF 163-494</scope>
</reference>
<reference key="14">
    <citation type="journal article" date="2001" name="Xenobiotica">
        <title>Roles of cytochrome P450 3A enzymes in the 2-hydroxylation of 1,4-cineole, a monoterpene cyclic ether, by rat and human liver microsomes.</title>
        <authorList>
            <person name="Miyazawa M."/>
            <person name="Shindo M."/>
            <person name="Shimada T."/>
        </authorList>
    </citation>
    <scope>CATALYTIC ACTIVITY</scope>
    <scope>FUNCTION AS 1,4-CINEOLE 2-EXO-MONOOXYGENASE</scope>
    <scope>BIOPHYSICOCHEMICAL PROPERTIES</scope>
</reference>
<reference key="15">
    <citation type="journal article" date="2014" name="J. Proteomics">
        <title>An enzyme assisted RP-RPLC approach for in-depth analysis of human liver phosphoproteome.</title>
        <authorList>
            <person name="Bian Y."/>
            <person name="Song C."/>
            <person name="Cheng K."/>
            <person name="Dong M."/>
            <person name="Wang F."/>
            <person name="Huang J."/>
            <person name="Sun D."/>
            <person name="Wang L."/>
            <person name="Ye M."/>
            <person name="Zou H."/>
        </authorList>
    </citation>
    <scope>IDENTIFICATION BY MASS SPECTROMETRY [LARGE SCALE ANALYSIS]</scope>
    <source>
        <tissue>Liver</tissue>
    </source>
</reference>
<reference key="16">
    <citation type="journal article" date="2005" name="Nat. Struct. Mol. Biol.">
        <title>Structures of human microsomal cytochrome P450 2A6 complexed with coumarin and methoxsalen.</title>
        <authorList>
            <person name="Yano J.K."/>
            <person name="Hsu M.H."/>
            <person name="Griffin K.J."/>
            <person name="Stout C.D."/>
            <person name="Johnson E.F."/>
        </authorList>
    </citation>
    <scope>X-RAY CRYSTALLOGRAPHY (1.9 ANGSTROMS) OF 29-494 IN COMPLEX WITH COUMARIN; HEME AND THE INHIBITOR METHOXSALEN</scope>
    <scope>FUNCTION</scope>
    <scope>BIOPHYSICOCHEMICAL PROPERTIES</scope>
</reference>
<reference key="17">
    <citation type="journal article" date="2006" name="J. Med. Chem.">
        <title>Synthetic inhibitors of cytochrome P-450 2A6: inhibitory activity, difference spectra, mechanism of inhibition, and protein cocrystallization.</title>
        <authorList>
            <person name="Yano J.K."/>
            <person name="Denton T.T."/>
            <person name="Cerny M.A."/>
            <person name="Zhang X."/>
            <person name="Johnson E.F."/>
            <person name="Cashman J.R."/>
        </authorList>
    </citation>
    <scope>X-RAY CRYSTALLOGRAPHY (1.65 ANGSTROMS) OF 29-494 IN COMPLEX WITH PHENACETIN AND HEME</scope>
    <scope>FUNCTION</scope>
</reference>
<reference key="18">
    <citation type="journal article" date="2008" name="Drug Metab. Dispos.">
        <title>Key residues controlling phenacetin metabolism by human cytochrome P450 2A enzymes.</title>
        <authorList>
            <person name="DeVore N.M."/>
            <person name="Smith B.D."/>
            <person name="Urban M.J."/>
            <person name="Scott E.E."/>
        </authorList>
    </citation>
    <scope>X-RAY CRYSTALLOGRAPHY (2.15 ANGSTROMS) OF 29-494 IN COMPLEX WITH PHENACETIN AND HEME</scope>
    <scope>FUNCTION</scope>
    <scope>CHARACTERIZATION OF VARIANTS LEU-110 AND MET-365</scope>
    <scope>MUTAGENESIS OF ILE-208; SER-213; ILE-300; GLY-301; SER-369 AND ARG-372</scope>
</reference>
<reference key="19">
    <citation type="journal article" date="1997" name="Food Chem. Toxicol.">
        <title>A single amino acid substitution (Leu160His) in cytochrome P450 CYP2A6 causes switching from 7-hydroxylation to 3-hydroxylation of coumarin.</title>
        <authorList>
            <person name="Hadidi H."/>
            <person name="Zahlsen K."/>
            <person name="Idle J.R."/>
            <person name="Cholerton S."/>
        </authorList>
    </citation>
    <scope>CHARACTERIZATION OF VARIANT HIS-160</scope>
</reference>
<reference key="20">
    <citation type="journal article" date="1999" name="FEBS Lett.">
        <title>Identification and characterisation of novel polymorphisms in the CYP2A locus: implications for nicotine metabolism.</title>
        <authorList>
            <person name="Oscarson M."/>
            <person name="McLellan R.A."/>
            <person name="Gullsten H."/>
            <person name="Agundez J.A."/>
            <person name="Benitez J."/>
            <person name="Rautio A."/>
            <person name="Raunio H."/>
            <person name="Pelkonen O."/>
            <person name="Ingelman-Sundberg M."/>
        </authorList>
    </citation>
    <scope>VARIANT VAL-479</scope>
</reference>
<reference key="21">
    <citation type="journal article" date="2001" name="Biochem. Biophys. Res. Commun.">
        <title>A novel single nucleotide polymorphism altering stability and activity of CYP2a6.</title>
        <authorList>
            <person name="Ariyoshi N."/>
            <person name="Sawamura Y."/>
            <person name="Kamataki T."/>
        </authorList>
    </citation>
    <scope>VARIANTS THR-471 AND LEU-485</scope>
</reference>
<reference key="22">
    <citation type="journal article" date="2002" name="Drug Metab. Pharmacokinet.">
        <title>Twenty one novel single nucleotide polymorphisms (SNPs) of the CYP2A6 gene in Japanese and Caucasians.</title>
        <authorList>
            <person name="Kiyotani K."/>
            <person name="Fujieda M."/>
            <person name="Yamazaki H."/>
            <person name="Shimada T."/>
            <person name="Guengerich F.P."/>
            <person name="Parkinson A."/>
            <person name="Nakagawa K."/>
            <person name="Ishizaki T."/>
            <person name="Kamataki T."/>
        </authorList>
    </citation>
    <scope>VARIANTS ARG-5; ASN-29; GLU-194 AND SER-203</scope>
</reference>
<reference key="23">
    <citation type="journal article" date="2003" name="J. Hum. Genet.">
        <title>Catalog of 680 variations among eight cytochrome p450 (CYP) genes, nine esterase genes, and two other genes in the Japanese population.</title>
        <authorList>
            <person name="Saito S."/>
            <person name="Iida A."/>
            <person name="Sekine A."/>
            <person name="Kawauchi S."/>
            <person name="Higuchi S."/>
            <person name="Ogawa C."/>
            <person name="Nakamura Y."/>
        </authorList>
    </citation>
    <scope>VARIANTS ASP-419 AND THR-471</scope>
</reference>
<reference key="24">
    <citation type="journal article" date="2004" name="Pharmacogenomics">
        <title>Genetic variation in eleven phase I drug metabolism genes in an ethnically diverse population.</title>
        <authorList>
            <person name="Solus J.F."/>
            <person name="Arietta B.J."/>
            <person name="Harris J.R."/>
            <person name="Sexton D.P."/>
            <person name="Steward J.Q."/>
            <person name="McMunn C."/>
            <person name="Ihrie P."/>
            <person name="Mehall J.M."/>
            <person name="Edwards T.L."/>
            <person name="Dawson E.P."/>
        </authorList>
    </citation>
    <scope>VARIANTS ARG-5; ASN-29; LEU-118; GLN-128; PRO-224; MET-365; ASP-418; ASP-419; THR-471; ARG-476 AND LEU-485</scope>
</reference>
<reference key="25">
    <citation type="journal article" date="2008" name="Hum. Mutat.">
        <title>Novel and established CYP2A6 alleles impair in vivo nicotine metabolism in a population of Black African descent.</title>
        <authorList>
            <person name="Mwenifumbo J.C."/>
            <person name="Al Koudsi N."/>
            <person name="Ho M.K."/>
            <person name="Zhou Q."/>
            <person name="Hoffmann E.B."/>
            <person name="Sellers E.M."/>
            <person name="Tyndale R.F."/>
        </authorList>
    </citation>
    <scope>VARIANTS LEU-110; LEU-118; LEU-128; ALA-131; ASP-418; ASP-419 AND TYR-438</scope>
</reference>
<reference key="26">
    <citation type="journal article" date="2008" name="Pharmacogenet. Genomics">
        <title>A novel CYP2A6 allele, CYP2A6*23, impairs enzyme function in vitro and in vivo and decreases smoking in a population of Black-African descent.</title>
        <authorList>
            <person name="Ho M.K."/>
            <person name="Mwenifumbo J.C."/>
            <person name="Zhao B."/>
            <person name="Gillam E.M."/>
            <person name="Tyndale R.F."/>
        </authorList>
    </citation>
    <scope>VARIANTS CYS-203; SER-203 AND MET-365</scope>
    <scope>CHARACTERIZATION OF VARIANT CYS-203</scope>
</reference>
<comment type="function">
    <text evidence="4 9 10 13 14 15">Exhibits a high coumarin 7-hydroxylase activity. Can act in the hydroxylation of the anti-cancer drugs cyclophosphamide and ifosphamide. Competent in the metabolic activation of aflatoxin B1. Constitutes the major nicotine C-oxidase. Acts as a 1,4-cineole 2-exo-monooxygenase. Possesses low phenacetin O-deethylation activity.</text>
</comment>
<comment type="catalytic activity">
    <reaction evidence="4">
        <text>1,4-cineole + reduced [NADPH--hemoprotein reductase] + O2 = 2-exo-hydroxy-1,4-cineole + oxidized [NADPH--hemoprotein reductase] + H2O + H(+)</text>
        <dbReference type="Rhea" id="RHEA:49160"/>
        <dbReference type="Rhea" id="RHEA-COMP:11964"/>
        <dbReference type="Rhea" id="RHEA-COMP:11965"/>
        <dbReference type="ChEBI" id="CHEBI:15377"/>
        <dbReference type="ChEBI" id="CHEBI:15378"/>
        <dbReference type="ChEBI" id="CHEBI:15379"/>
        <dbReference type="ChEBI" id="CHEBI:57618"/>
        <dbReference type="ChEBI" id="CHEBI:58210"/>
        <dbReference type="ChEBI" id="CHEBI:80788"/>
        <dbReference type="ChEBI" id="CHEBI:90956"/>
    </reaction>
</comment>
<comment type="cofactor">
    <cofactor>
        <name>heme</name>
        <dbReference type="ChEBI" id="CHEBI:30413"/>
    </cofactor>
</comment>
<comment type="biophysicochemical properties">
    <kinetics>
        <KM evidence="9">0.23 uM for coumarin</KM>
        <KM evidence="4">530 uM for 1,4-cineole</KM>
        <Vmax evidence="4">3.5 nmol/min/nmol enzyme toward 1,4-cineole</Vmax>
    </kinetics>
</comment>
<comment type="interaction">
    <interactant intactId="EBI-21447212">
        <id>P11509</id>
    </interactant>
    <interactant intactId="EBI-712367">
        <id>Q9UI14</id>
        <label>RABAC1</label>
    </interactant>
    <organismsDiffer>false</organismsDiffer>
    <experiments>2</experiments>
</comment>
<comment type="subcellular location">
    <subcellularLocation>
        <location>Endoplasmic reticulum membrane</location>
        <topology>Peripheral membrane protein</topology>
    </subcellularLocation>
    <subcellularLocation>
        <location>Microsome membrane</location>
        <topology>Peripheral membrane protein</topology>
    </subcellularLocation>
</comment>
<comment type="tissue specificity">
    <text evidence="14 15">Liver.</text>
</comment>
<comment type="induction">
    <text evidence="14 15">By phenobarbital and dexamethasone.</text>
</comment>
<comment type="similarity">
    <text evidence="22">Belongs to the cytochrome P450 family.</text>
</comment>
<comment type="sequence caution" evidence="22">
    <conflict type="miscellaneous discrepancy">
        <sequence resource="EMBL-CDS" id="AAA52147"/>
    </conflict>
    <text>Numerous conflicts and frameshifts.</text>
</comment>
<comment type="online information" name="PharmVar Pharmacogen Variation Consortium">
    <link uri="https://www.pharmvar.org/gene/CYP2A6"/>
    <text>CYP2A6 alleles</text>
</comment>
<comment type="online information" name="Wikipedia">
    <link uri="https://en.wikipedia.org/wiki/CYP2A6"/>
    <text>CYP2A6 entry</text>
</comment>
<comment type="online information" name="Atlas of Genetics and Cytogenetics in Oncology and Haematology">
    <link uri="https://atlasgeneticsoncology.org/gene/40240/CYP2A6"/>
</comment>
<feature type="chain" id="PRO_0000051668" description="Cytochrome P450 2A6">
    <location>
        <begin position="1"/>
        <end position="494"/>
    </location>
</feature>
<feature type="binding site" evidence="22">
    <location>
        <position position="107"/>
    </location>
    <ligand>
        <name>substrate</name>
    </ligand>
</feature>
<feature type="binding site">
    <location>
        <position position="297"/>
    </location>
    <ligand>
        <name>substrate</name>
    </ligand>
</feature>
<feature type="binding site" description="axial binding residue">
    <location>
        <position position="439"/>
    </location>
    <ligand>
        <name>heme</name>
        <dbReference type="ChEBI" id="CHEBI:30413"/>
    </ligand>
    <ligandPart>
        <name>Fe</name>
        <dbReference type="ChEBI" id="CHEBI:18248"/>
    </ligandPart>
</feature>
<feature type="sequence variant" id="VAR_018330" description="In allele CYP2A6*13; dbSNP:rs28399434." evidence="6 8">
    <original>G</original>
    <variation>R</variation>
    <location>
        <position position="5"/>
    </location>
</feature>
<feature type="sequence variant" id="VAR_018331" description="In allele CYP2A6*14; dbSNP:rs28399435." evidence="6 8 17">
    <original>S</original>
    <variation>N</variation>
    <location>
        <position position="29"/>
    </location>
</feature>
<feature type="sequence variant" id="VAR_055035" description="In allele CYP2A6*24; increases phenacetin O-deethylation activity 4 fold; dbSNP:rs72549435." evidence="12 13">
    <original>V</original>
    <variation>L</variation>
    <location>
        <position position="110"/>
    </location>
</feature>
<feature type="sequence variant" id="VAR_024711" description="In allele CYP2A6*25 and allele CYP2A6*26; dbSNP:rs28399440." evidence="6 12">
    <original>F</original>
    <variation>L</variation>
    <location>
        <position position="118"/>
    </location>
</feature>
<feature type="sequence variant" id="VAR_055036" description="In allele CYP2A6*26; dbSNP:rs4986891." evidence="12">
    <original>R</original>
    <variation>L</variation>
    <location>
        <position position="128"/>
    </location>
</feature>
<feature type="sequence variant" id="VAR_011577" description="In allele CYP2A6*6; loss of activity; dbSNP:rs4986891." evidence="3 6">
    <original>R</original>
    <variation>Q</variation>
    <location>
        <position position="128"/>
    </location>
</feature>
<feature type="sequence variant" id="VAR_055037" description="In allele CYP2A6*26; dbSNP:rs59552350." evidence="12">
    <original>S</original>
    <variation>A</variation>
    <location>
        <position position="131"/>
    </location>
</feature>
<feature type="sequence variant" id="VAR_001249" description="In allele CYP2A6*2; unable to catalyze 7-hydroxylation of coumarin; causes switching from coumarin 7-hydroxylation to 3-hydroxylation; dbSNP:rs1801272." evidence="7 16 18 19">
    <original>L</original>
    <variation>H</variation>
    <location>
        <position position="160"/>
    </location>
</feature>
<feature type="sequence variant" id="VAR_018332" description="In allele CYP2A6*15; dbSNP:rs199916117." evidence="8">
    <original>K</original>
    <variation>E</variation>
    <location>
        <position position="194"/>
    </location>
</feature>
<feature type="sequence variant" id="VAR_055034" description="In allele CYP2A6*23; greatly reduced activity toward nicotine C-oxidation as well as reduced coumarin 7-hydroxylation; dbSNP:rs56256500." evidence="11">
    <original>R</original>
    <variation>C</variation>
    <location>
        <position position="203"/>
    </location>
</feature>
<feature type="sequence variant" id="VAR_018333" description="In allele CYP2A6*16; dbSNP:rs56256500." evidence="8 11">
    <original>R</original>
    <variation>S</variation>
    <location>
        <position position="203"/>
    </location>
</feature>
<feature type="sequence variant" id="VAR_024712" description="In dbSNP:rs28399447." evidence="6">
    <original>S</original>
    <variation>P</variation>
    <location>
        <position position="224"/>
    </location>
</feature>
<feature type="sequence variant" id="VAR_059149" description="In dbSNP:rs2644906.">
    <original>V</original>
    <variation>M</variation>
    <location>
        <position position="292"/>
    </location>
</feature>
<feature type="sequence variant" id="VAR_048448" description="In dbSNP:rs4997557.">
    <original>T</original>
    <variation>S</variation>
    <location>
        <position position="294"/>
    </location>
</feature>
<feature type="sequence variant" id="VAR_024713" description="In allele CYP2A6*17; increases phenacetin O-deethylation activity 2 fold; dbSNP:rs28399454." evidence="6 11 13">
    <original>V</original>
    <variation>M</variation>
    <location>
        <position position="365"/>
    </location>
</feature>
<feature type="sequence variant" id="VAR_055033" description="In dbSNP:rs1809810." evidence="21">
    <original>Y</original>
    <variation>F</variation>
    <location>
        <position position="392"/>
    </location>
</feature>
<feature type="sequence variant" id="VAR_024714" description="In allele CYP2A6*28; dbSNP:rs28399463." evidence="6 12">
    <original>N</original>
    <variation>D</variation>
    <location>
        <position position="418"/>
    </location>
</feature>
<feature type="sequence variant" id="VAR_018375" description="In allele CYP2A6*28; dbSNP:rs8192730." evidence="5 6 12">
    <original>E</original>
    <variation>D</variation>
    <location>
        <position position="419"/>
    </location>
</feature>
<feature type="sequence variant" id="VAR_055038" description="In allele CYP2A6*24; dbSNP:rs143731390." evidence="12">
    <original>N</original>
    <variation>Y</variation>
    <location>
        <position position="438"/>
    </location>
</feature>
<feature type="sequence variant" id="VAR_011578" description="In allele CYP2A6*7; dbSNP:rs5031016." evidence="2 5 6">
    <original>I</original>
    <variation>T</variation>
    <location>
        <position position="471"/>
    </location>
</feature>
<feature type="sequence variant" id="VAR_024715" description="In dbSNP:rs6413474." evidence="6 7">
    <original>K</original>
    <variation>R</variation>
    <location>
        <position position="476"/>
    </location>
</feature>
<feature type="sequence variant" id="VAR_008356" description="In allele CYP2A6*5; loss of activity; dbSNP:rs5031017." evidence="1 20">
    <original>G</original>
    <variation>V</variation>
    <location>
        <position position="479"/>
    </location>
</feature>
<feature type="sequence variant" id="VAR_011579" description="In allele CYP2A6*8; dbSNP:rs28399468." evidence="2 6">
    <original>R</original>
    <variation>L</variation>
    <location>
        <position position="485"/>
    </location>
</feature>
<feature type="mutagenesis site" description="Increases phenacetin O-deethylation activity 10 fold; when associated with F-300 and A-301. Increases phenacetin O-deethylation activity 38 fold; when associated with F-300; A-301 and G-369." evidence="13">
    <original>I</original>
    <variation>S</variation>
    <location>
        <position position="208"/>
    </location>
</feature>
<feature type="mutagenesis site" description="No effect on phenacetin O-deethylation activity." evidence="13">
    <original>S</original>
    <variation>A</variation>
    <location>
        <position position="213"/>
    </location>
</feature>
<feature type="mutagenesis site" description="Increases phenacetin O-deethylation activity 3 fold. Increases phenacetin O-deethylation activity 8 fold; when associated with A-301. Increases phenacetin O-deethylation activity 10 fold; when associated with S-208 and A-301. Increases phenacetin O-deethylation activity 12 fold; when associated with A-301 and G-369. Increases phenacetin O-deethylation activity 38 fold; when associated with S-208; A-301 and G-369." evidence="13">
    <original>I</original>
    <variation>F</variation>
    <location>
        <position position="300"/>
    </location>
</feature>
<feature type="mutagenesis site" description="Slightly decreases phenacetin O-deethylation activity. Increases phenacetin O-deethylation activity 8 fold; when associated with F-300. Increases phenacetin O-deethylation activity 10 fold; when associated with S-208 and F-300. Increases phenacetin O-deethylation activity 12 fold; when associated with F-300 and G-369. Increases phenacetin O-deethylation activity 38 fold; when associated with S-208; F-300 and G-369." evidence="13">
    <original>G</original>
    <variation>A</variation>
    <location>
        <position position="301"/>
    </location>
</feature>
<feature type="mutagenesis site" description="Increases phenacetin O-deethylation activity 3 fold. Increases phenacetin O-deethylation activity 38 fold; when associated with S-208; F-300 and A-301." evidence="13">
    <original>S</original>
    <variation>G</variation>
    <location>
        <position position="369"/>
    </location>
</feature>
<feature type="mutagenesis site" description="Increases phenacetin O-deethylation activity 2 fold." evidence="13">
    <original>R</original>
    <variation>H</variation>
    <location>
        <position position="372"/>
    </location>
</feature>
<feature type="sequence conflict" description="In Ref. 1; CAA32097." evidence="22" ref="1">
    <location>
        <begin position="3"/>
        <end position="7"/>
    </location>
</feature>
<feature type="sequence conflict" description="In Ref. 1; CAA32097." evidence="22" ref="1">
    <original>N</original>
    <variation>K</variation>
    <location>
        <position position="255"/>
    </location>
</feature>
<feature type="sequence conflict" description="In Ref. 1; CAA32097." evidence="22" ref="1">
    <original>K</original>
    <variation>Q</variation>
    <location>
        <position position="326"/>
    </location>
</feature>
<feature type="turn" evidence="24">
    <location>
        <begin position="41"/>
        <end position="43"/>
    </location>
</feature>
<feature type="helix" evidence="24">
    <location>
        <begin position="46"/>
        <end position="48"/>
    </location>
</feature>
<feature type="helix" evidence="23">
    <location>
        <begin position="51"/>
        <end position="53"/>
    </location>
</feature>
<feature type="helix" evidence="24">
    <location>
        <begin position="54"/>
        <end position="65"/>
    </location>
</feature>
<feature type="strand" evidence="24">
    <location>
        <begin position="67"/>
        <end position="73"/>
    </location>
</feature>
<feature type="strand" evidence="24">
    <location>
        <begin position="76"/>
        <end position="81"/>
    </location>
</feature>
<feature type="helix" evidence="24">
    <location>
        <begin position="84"/>
        <end position="91"/>
    </location>
</feature>
<feature type="turn" evidence="24">
    <location>
        <begin position="92"/>
        <end position="98"/>
    </location>
</feature>
<feature type="helix" evidence="24">
    <location>
        <begin position="105"/>
        <end position="111"/>
    </location>
</feature>
<feature type="strand" evidence="24">
    <location>
        <begin position="115"/>
        <end position="118"/>
    </location>
</feature>
<feature type="helix" evidence="24">
    <location>
        <begin position="121"/>
        <end position="137"/>
    </location>
</feature>
<feature type="turn" evidence="24">
    <location>
        <begin position="138"/>
        <end position="141"/>
    </location>
</feature>
<feature type="helix" evidence="24">
    <location>
        <begin position="143"/>
        <end position="162"/>
    </location>
</feature>
<feature type="turn" evidence="24">
    <location>
        <begin position="163"/>
        <end position="165"/>
    </location>
</feature>
<feature type="helix" evidence="24">
    <location>
        <begin position="171"/>
        <end position="187"/>
    </location>
</feature>
<feature type="helix" evidence="24">
    <location>
        <begin position="196"/>
        <end position="212"/>
    </location>
</feature>
<feature type="helix" evidence="24">
    <location>
        <begin position="215"/>
        <end position="227"/>
    </location>
</feature>
<feature type="strand" evidence="25">
    <location>
        <begin position="230"/>
        <end position="232"/>
    </location>
</feature>
<feature type="helix" evidence="24">
    <location>
        <begin position="233"/>
        <end position="256"/>
    </location>
</feature>
<feature type="helix" evidence="24">
    <location>
        <begin position="267"/>
        <end position="277"/>
    </location>
</feature>
<feature type="turn" evidence="24">
    <location>
        <begin position="278"/>
        <end position="280"/>
    </location>
</feature>
<feature type="helix" evidence="24">
    <location>
        <begin position="288"/>
        <end position="319"/>
    </location>
</feature>
<feature type="helix" evidence="24">
    <location>
        <begin position="321"/>
        <end position="334"/>
    </location>
</feature>
<feature type="strand" evidence="24">
    <location>
        <begin position="337"/>
        <end position="339"/>
    </location>
</feature>
<feature type="helix" evidence="24">
    <location>
        <begin position="343"/>
        <end position="348"/>
    </location>
</feature>
<feature type="helix" evidence="24">
    <location>
        <begin position="350"/>
        <end position="363"/>
    </location>
</feature>
<feature type="strand" evidence="24">
    <location>
        <begin position="378"/>
        <end position="380"/>
    </location>
</feature>
<feature type="strand" evidence="24">
    <location>
        <begin position="383"/>
        <end position="385"/>
    </location>
</feature>
<feature type="strand" evidence="24">
    <location>
        <begin position="390"/>
        <end position="393"/>
    </location>
</feature>
<feature type="helix" evidence="24">
    <location>
        <begin position="395"/>
        <end position="399"/>
    </location>
</feature>
<feature type="turn" evidence="24">
    <location>
        <begin position="402"/>
        <end position="404"/>
    </location>
</feature>
<feature type="strand" evidence="27">
    <location>
        <begin position="405"/>
        <end position="407"/>
    </location>
</feature>
<feature type="helix" evidence="24">
    <location>
        <begin position="413"/>
        <end position="416"/>
    </location>
</feature>
<feature type="strand" evidence="26">
    <location>
        <begin position="419"/>
        <end position="421"/>
    </location>
</feature>
<feature type="helix" evidence="24">
    <location>
        <begin position="442"/>
        <end position="459"/>
    </location>
</feature>
<feature type="strand" evidence="24">
    <location>
        <begin position="460"/>
        <end position="466"/>
    </location>
</feature>
<feature type="helix" evidence="24">
    <location>
        <begin position="468"/>
        <end position="470"/>
    </location>
</feature>
<feature type="strand" evidence="24">
    <location>
        <begin position="476"/>
        <end position="483"/>
    </location>
</feature>
<feature type="strand" evidence="24">
    <location>
        <begin position="489"/>
        <end position="493"/>
    </location>
</feature>
<accession>P11509</accession>
<accession>A7YAE5</accession>
<accession>B2R7F6</accession>
<accession>P00190</accession>
<accession>P10890</accession>
<accession>Q16803</accession>
<accession>Q4VAT9</accession>
<accession>Q4VAU0</accession>
<accession>Q4VAU1</accession>
<accession>Q9H1Z7</accession>
<accession>Q9UCU0</accession>
<accession>Q9UK48</accession>
<proteinExistence type="evidence at protein level"/>
<dbReference type="EC" id="1.14.14.-"/>
<dbReference type="EMBL" id="X13897">
    <property type="protein sequence ID" value="CAA32097.1"/>
    <property type="molecule type" value="mRNA"/>
</dbReference>
<dbReference type="EMBL" id="X13929">
    <property type="protein sequence ID" value="CAA32117.1"/>
    <property type="molecule type" value="mRNA"/>
</dbReference>
<dbReference type="EMBL" id="X13930">
    <property type="protein sequence ID" value="CAA32118.1"/>
    <property type="molecule type" value="mRNA"/>
</dbReference>
<dbReference type="EMBL" id="M33318">
    <property type="protein sequence ID" value="AAA52067.1"/>
    <property type="molecule type" value="mRNA"/>
</dbReference>
<dbReference type="EMBL" id="AF182275">
    <property type="protein sequence ID" value="AAF13600.1"/>
    <property type="molecule type" value="mRNA"/>
</dbReference>
<dbReference type="EMBL" id="AK312964">
    <property type="protein sequence ID" value="BAG35803.1"/>
    <property type="molecule type" value="mRNA"/>
</dbReference>
<dbReference type="EMBL" id="EU135979">
    <property type="protein sequence ID" value="ABV02584.1"/>
    <property type="molecule type" value="Genomic_DNA"/>
</dbReference>
<dbReference type="EMBL" id="FJ440681">
    <property type="protein sequence ID" value="ACK44068.1"/>
    <property type="molecule type" value="Genomic_DNA"/>
</dbReference>
<dbReference type="EMBL" id="AC008537">
    <property type="status" value="NOT_ANNOTATED_CDS"/>
    <property type="molecule type" value="Genomic_DNA"/>
</dbReference>
<dbReference type="EMBL" id="CH471126">
    <property type="protein sequence ID" value="EAW57012.1"/>
    <property type="molecule type" value="Genomic_DNA"/>
</dbReference>
<dbReference type="EMBL" id="BC096253">
    <property type="protein sequence ID" value="AAH96253.3"/>
    <property type="molecule type" value="mRNA"/>
</dbReference>
<dbReference type="EMBL" id="BC096254">
    <property type="protein sequence ID" value="AAH96254.1"/>
    <property type="molecule type" value="mRNA"/>
</dbReference>
<dbReference type="EMBL" id="BC096255">
    <property type="protein sequence ID" value="AAH96255.1"/>
    <property type="molecule type" value="mRNA"/>
</dbReference>
<dbReference type="EMBL" id="BC096256">
    <property type="protein sequence ID" value="AAH96256.1"/>
    <property type="molecule type" value="mRNA"/>
</dbReference>
<dbReference type="EMBL" id="AF326721">
    <property type="protein sequence ID" value="AAG45229.1"/>
    <property type="molecule type" value="Genomic_DNA"/>
</dbReference>
<dbReference type="EMBL" id="K03192">
    <property type="protein sequence ID" value="AAA52147.1"/>
    <property type="status" value="ALT_SEQ"/>
    <property type="molecule type" value="mRNA"/>
</dbReference>
<dbReference type="CCDS" id="CCDS12568.1"/>
<dbReference type="PIR" id="A00190">
    <property type="entry name" value="O4HUPB"/>
</dbReference>
<dbReference type="PIR" id="S04698">
    <property type="entry name" value="O4HUA6"/>
</dbReference>
<dbReference type="RefSeq" id="NP_000753.3">
    <property type="nucleotide sequence ID" value="NM_000762.5"/>
</dbReference>
<dbReference type="PDB" id="1Z10">
    <property type="method" value="X-ray"/>
    <property type="resolution" value="1.90 A"/>
    <property type="chains" value="A/B/C/D=29-494"/>
</dbReference>
<dbReference type="PDB" id="1Z11">
    <property type="method" value="X-ray"/>
    <property type="resolution" value="2.05 A"/>
    <property type="chains" value="A/B/C/D=29-494"/>
</dbReference>
<dbReference type="PDB" id="2FDU">
    <property type="method" value="X-ray"/>
    <property type="resolution" value="1.85 A"/>
    <property type="chains" value="A/B/C/D=29-494"/>
</dbReference>
<dbReference type="PDB" id="2FDV">
    <property type="method" value="X-ray"/>
    <property type="resolution" value="1.65 A"/>
    <property type="chains" value="A/B/C/D=29-494"/>
</dbReference>
<dbReference type="PDB" id="2FDW">
    <property type="method" value="X-ray"/>
    <property type="resolution" value="2.05 A"/>
    <property type="chains" value="A/B/C/D=29-494"/>
</dbReference>
<dbReference type="PDB" id="2FDY">
    <property type="method" value="X-ray"/>
    <property type="resolution" value="1.95 A"/>
    <property type="chains" value="A/B/C/D=29-494"/>
</dbReference>
<dbReference type="PDB" id="3EBS">
    <property type="method" value="X-ray"/>
    <property type="resolution" value="2.15 A"/>
    <property type="chains" value="A/B/C/D=29-494"/>
</dbReference>
<dbReference type="PDB" id="3T3Q">
    <property type="method" value="X-ray"/>
    <property type="resolution" value="2.10 A"/>
    <property type="chains" value="A/B/C/D=29-494"/>
</dbReference>
<dbReference type="PDB" id="3T3R">
    <property type="method" value="X-ray"/>
    <property type="resolution" value="2.40 A"/>
    <property type="chains" value="A/B/C/D=29-494"/>
</dbReference>
<dbReference type="PDB" id="4EJJ">
    <property type="method" value="X-ray"/>
    <property type="resolution" value="2.30 A"/>
    <property type="chains" value="A/B/C/D=29-494"/>
</dbReference>
<dbReference type="PDB" id="4RUI">
    <property type="method" value="X-ray"/>
    <property type="resolution" value="2.61 A"/>
    <property type="chains" value="A/B/C/D/E/F=29-494"/>
</dbReference>
<dbReference type="PDBsum" id="1Z10"/>
<dbReference type="PDBsum" id="1Z11"/>
<dbReference type="PDBsum" id="2FDU"/>
<dbReference type="PDBsum" id="2FDV"/>
<dbReference type="PDBsum" id="2FDW"/>
<dbReference type="PDBsum" id="2FDY"/>
<dbReference type="PDBsum" id="3EBS"/>
<dbReference type="PDBsum" id="3T3Q"/>
<dbReference type="PDBsum" id="3T3R"/>
<dbReference type="PDBsum" id="4EJJ"/>
<dbReference type="PDBsum" id="4RUI"/>
<dbReference type="SMR" id="P11509"/>
<dbReference type="BioGRID" id="107927">
    <property type="interactions" value="9"/>
</dbReference>
<dbReference type="FunCoup" id="P11509">
    <property type="interactions" value="218"/>
</dbReference>
<dbReference type="IntAct" id="P11509">
    <property type="interactions" value="2"/>
</dbReference>
<dbReference type="STRING" id="9606.ENSP00000301141"/>
<dbReference type="BindingDB" id="P11509"/>
<dbReference type="ChEMBL" id="CHEMBL5282"/>
<dbReference type="DrugBank" id="DB07621">
    <property type="generic name" value="(5-(PYRIDIN-3-YL)FURAN-2-YL)METHANAMINE"/>
</dbReference>
<dbReference type="DrugBank" id="DB07623">
    <property type="generic name" value="4,4'-DIPYRIDYL DISULFIDE"/>
</dbReference>
<dbReference type="DrugBank" id="DB00316">
    <property type="generic name" value="Acetaminophen"/>
</dbReference>
<dbReference type="DrugBank" id="DB01118">
    <property type="generic name" value="Amiodarone"/>
</dbReference>
<dbReference type="DrugBank" id="DB00182">
    <property type="generic name" value="Amphetamine"/>
</dbReference>
<dbReference type="DrugBank" id="DB01435">
    <property type="generic name" value="Antipyrine"/>
</dbReference>
<dbReference type="DrugBank" id="DB05676">
    <property type="generic name" value="Apremilast"/>
</dbReference>
<dbReference type="DrugBank" id="DB01274">
    <property type="generic name" value="Arformoterol"/>
</dbReference>
<dbReference type="DrugBank" id="DB09274">
    <property type="generic name" value="Artesunate"/>
</dbReference>
<dbReference type="DrugBank" id="DB11586">
    <property type="generic name" value="Asunaprevir"/>
</dbReference>
<dbReference type="DrugBank" id="DB00972">
    <property type="generic name" value="Azelastine"/>
</dbReference>
<dbReference type="DrugBank" id="DB00443">
    <property type="generic name" value="Betamethasone"/>
</dbReference>
<dbReference type="DrugBank" id="DB01194">
    <property type="generic name" value="Brinzolamide"/>
</dbReference>
<dbReference type="DrugBank" id="DB01222">
    <property type="generic name" value="Budesonide"/>
</dbReference>
<dbReference type="DrugBank" id="DB09061">
    <property type="generic name" value="Cannabidiol"/>
</dbReference>
<dbReference type="DrugBank" id="DB14737">
    <property type="generic name" value="Cannabinol"/>
</dbReference>
<dbReference type="DrugBank" id="DB06119">
    <property type="generic name" value="Cenobamate"/>
</dbReference>
<dbReference type="DrugBank" id="DB00356">
    <property type="generic name" value="Chlorzoxazone"/>
</dbReference>
<dbReference type="DrugBank" id="DB00568">
    <property type="generic name" value="Cinnarizine"/>
</dbReference>
<dbReference type="DrugBank" id="DB00604">
    <property type="generic name" value="Cisapride"/>
</dbReference>
<dbReference type="DrugBank" id="DB06470">
    <property type="generic name" value="Clomethiazole"/>
</dbReference>
<dbReference type="DrugBank" id="DB00257">
    <property type="generic name" value="Clotrimazole"/>
</dbReference>
<dbReference type="DrugBank" id="DB00363">
    <property type="generic name" value="Clozapine"/>
</dbReference>
<dbReference type="DrugBank" id="DB04665">
    <property type="generic name" value="Coumarin"/>
</dbReference>
<dbReference type="DrugBank" id="DB00531">
    <property type="generic name" value="Cyclophosphamide"/>
</dbReference>
<dbReference type="DrugBank" id="DB06292">
    <property type="generic name" value="Dapagliflozin"/>
</dbReference>
<dbReference type="DrugBank" id="DB01234">
    <property type="generic name" value="Dexamethasone"/>
</dbReference>
<dbReference type="DrugBank" id="DB14649">
    <property type="generic name" value="Dexamethasone acetate"/>
</dbReference>
<dbReference type="DrugBank" id="DB00470">
    <property type="generic name" value="Dronabinol"/>
</dbReference>
<dbReference type="DrugBank" id="DB06374">
    <property type="generic name" value="Elacestrant"/>
</dbReference>
<dbReference type="DrugBank" id="DB00216">
    <property type="generic name" value="Eletriptan"/>
</dbReference>
<dbReference type="DrugBank" id="DB00330">
    <property type="generic name" value="Ethambutol"/>
</dbReference>
<dbReference type="DrugBank" id="DB01039">
    <property type="generic name" value="Fenofibrate"/>
</dbReference>
<dbReference type="DrugBank" id="DB04841">
    <property type="generic name" value="Flunarizine"/>
</dbReference>
<dbReference type="DrugBank" id="DB01544">
    <property type="generic name" value="Flunitrazepam"/>
</dbReference>
<dbReference type="DrugBank" id="DB00544">
    <property type="generic name" value="Fluorouracil"/>
</dbReference>
<dbReference type="DrugBank" id="DB00690">
    <property type="generic name" value="Flurazepam"/>
</dbReference>
<dbReference type="DrugBank" id="DB01213">
    <property type="generic name" value="Fomepizole"/>
</dbReference>
<dbReference type="DrugBank" id="DB00983">
    <property type="generic name" value="Formoterol"/>
</dbReference>
<dbReference type="DrugBank" id="DB01159">
    <property type="generic name" value="Halothane"/>
</dbReference>
<dbReference type="DrugBank" id="DB00741">
    <property type="generic name" value="Hydrocortisone"/>
</dbReference>
<dbReference type="DrugBank" id="DB01181">
    <property type="generic name" value="Ifosfamide"/>
</dbReference>
<dbReference type="DrugBank" id="DB00951">
    <property type="generic name" value="Isoniazid"/>
</dbReference>
<dbReference type="DrugBank" id="DB01026">
    <property type="generic name" value="Ketoconazole"/>
</dbReference>
<dbReference type="DrugBank" id="DB01006">
    <property type="generic name" value="Letrozole"/>
</dbReference>
<dbReference type="DrugBank" id="DB00281">
    <property type="generic name" value="Lidocaine"/>
</dbReference>
<dbReference type="DrugBank" id="DB06448">
    <property type="generic name" value="Lonafarnib"/>
</dbReference>
<dbReference type="DrugBank" id="DB04871">
    <property type="generic name" value="Lorcaserin"/>
</dbReference>
<dbReference type="DrugBank" id="DB14009">
    <property type="generic name" value="Medical Cannabis"/>
</dbReference>
<dbReference type="DrugBank" id="DB01043">
    <property type="generic name" value="Memantine"/>
</dbReference>
<dbReference type="DrugBank" id="DB00170">
    <property type="generic name" value="Menadione"/>
</dbReference>
<dbReference type="DrugBank" id="DB00763">
    <property type="generic name" value="Methimazole"/>
</dbReference>
<dbReference type="DrugBank" id="DB00553">
    <property type="generic name" value="Methoxsalen"/>
</dbReference>
<dbReference type="DrugBank" id="DB01028">
    <property type="generic name" value="Methoxyflurane"/>
</dbReference>
<dbReference type="DrugBank" id="DB00959">
    <property type="generic name" value="Methylprednisolone"/>
</dbReference>
<dbReference type="DrugBank" id="DB00916">
    <property type="generic name" value="Metronidazole"/>
</dbReference>
<dbReference type="DrugBank" id="DB01011">
    <property type="generic name" value="Metyrapone"/>
</dbReference>
<dbReference type="DrugBank" id="DB01110">
    <property type="generic name" value="Miconazole"/>
</dbReference>
<dbReference type="DrugBank" id="DB00471">
    <property type="generic name" value="Montelukast"/>
</dbReference>
<dbReference type="DrugBank" id="DB07609">
    <property type="generic name" value="N,N-DIMETHYL(5-(PYRIDIN-3-YL)FURAN-2-YL)METHANAMINE"/>
</dbReference>
<dbReference type="DrugBank" id="DB07617">
    <property type="generic name" value="N-METHYL(5-(PYRIDIN-3-YL)FURAN-2-YL)METHANAMINE"/>
</dbReference>
<dbReference type="DrugBank" id="DB00238">
    <property type="generic name" value="Nevirapine"/>
</dbReference>
<dbReference type="DrugBank" id="DB00184">
    <property type="generic name" value="Nicotine"/>
</dbReference>
<dbReference type="DrugBank" id="DB01115">
    <property type="generic name" value="Nifedipine"/>
</dbReference>
<dbReference type="DrugBank" id="DB06712">
    <property type="generic name" value="Nilvadipine"/>
</dbReference>
<dbReference type="DrugBank" id="DB00717">
    <property type="generic name" value="Norethisterone"/>
</dbReference>
<dbReference type="DrugBank" id="DB00312">
    <property type="generic name" value="Pentobarbital"/>
</dbReference>
<dbReference type="DrugBank" id="DB03783">
    <property type="generic name" value="Phenacetin"/>
</dbReference>
<dbReference type="DrugBank" id="DB01174">
    <property type="generic name" value="Phenobarbital"/>
</dbReference>
<dbReference type="DrugBank" id="DB00252">
    <property type="generic name" value="Phenytoin"/>
</dbReference>
<dbReference type="DrugBank" id="DB01085">
    <property type="generic name" value="Pilocarpine"/>
</dbReference>
<dbReference type="DrugBank" id="DB04977">
    <property type="generic name" value="Plitidepsin"/>
</dbReference>
<dbReference type="DrugBank" id="DB14631">
    <property type="generic name" value="Prednisolone phosphate"/>
</dbReference>
<dbReference type="DrugBank" id="DB00635">
    <property type="generic name" value="Prednisone"/>
</dbReference>
<dbReference type="DrugBank" id="DB00396">
    <property type="generic name" value="Progesterone"/>
</dbReference>
<dbReference type="DrugBank" id="DB01045">
    <property type="generic name" value="Rifampin"/>
</dbReference>
<dbReference type="DrugBank" id="DB15119">
    <property type="generic name" value="Ropeginterferon alfa-2b"/>
</dbReference>
<dbReference type="DrugBank" id="DB01037">
    <property type="generic name" value="Selegiline"/>
</dbReference>
<dbReference type="DrugBank" id="DB06739">
    <property type="generic name" value="Seratrodast"/>
</dbReference>
<dbReference type="DrugBank" id="DB01236">
    <property type="generic name" value="Sevoflurane"/>
</dbReference>
<dbReference type="DrugBank" id="DB00675">
    <property type="generic name" value="Tamoxifen"/>
</dbReference>
<dbReference type="DrugBank" id="DB09256">
    <property type="generic name" value="Tegafur"/>
</dbReference>
<dbReference type="DrugBank" id="DB09327">
    <property type="generic name" value="Tegafur-uracil"/>
</dbReference>
<dbReference type="DrugBank" id="DB12816">
    <property type="generic name" value="Terpinen-4-ol"/>
</dbReference>
<dbReference type="DrugBank" id="DB00752">
    <property type="generic name" value="Tranylcypromine"/>
</dbReference>
<dbReference type="DrugBank" id="DB00755">
    <property type="generic name" value="Tretinoin"/>
</dbReference>
<dbReference type="DrugBank" id="DB12245">
    <property type="generic name" value="Triclabendazole"/>
</dbReference>
<dbReference type="DrugBank" id="DB00313">
    <property type="generic name" value="Valproic acid"/>
</dbReference>
<dbReference type="DrugBank" id="DB09068">
    <property type="generic name" value="Vortioxetine"/>
</dbReference>
<dbReference type="DrugBank" id="DB00495">
    <property type="generic name" value="Zidovudine"/>
</dbReference>
<dbReference type="DrugCentral" id="P11509"/>
<dbReference type="GuidetoPHARMACOLOGY" id="1321"/>
<dbReference type="GlyGen" id="P11509">
    <property type="glycosylation" value="1 site"/>
</dbReference>
<dbReference type="iPTMnet" id="P11509"/>
<dbReference type="PhosphoSitePlus" id="P11509"/>
<dbReference type="BioMuta" id="CYP2A6"/>
<dbReference type="DMDM" id="308153612"/>
<dbReference type="jPOST" id="P11509"/>
<dbReference type="MassIVE" id="P11509"/>
<dbReference type="PaxDb" id="9606-ENSP00000301141"/>
<dbReference type="PeptideAtlas" id="P11509"/>
<dbReference type="ProteomicsDB" id="52786"/>
<dbReference type="Antibodypedia" id="55503">
    <property type="antibodies" value="500 antibodies from 32 providers"/>
</dbReference>
<dbReference type="DNASU" id="1548"/>
<dbReference type="Ensembl" id="ENST00000301141.10">
    <property type="protein sequence ID" value="ENSP00000301141.4"/>
    <property type="gene ID" value="ENSG00000255974.8"/>
</dbReference>
<dbReference type="GeneID" id="1548"/>
<dbReference type="KEGG" id="hsa:1548"/>
<dbReference type="MANE-Select" id="ENST00000301141.10">
    <property type="protein sequence ID" value="ENSP00000301141.4"/>
    <property type="RefSeq nucleotide sequence ID" value="NM_000762.6"/>
    <property type="RefSeq protein sequence ID" value="NP_000753.3"/>
</dbReference>
<dbReference type="UCSC" id="uc002opl.4">
    <property type="organism name" value="human"/>
</dbReference>
<dbReference type="AGR" id="HGNC:2610"/>
<dbReference type="CTD" id="1548"/>
<dbReference type="DisGeNET" id="1548"/>
<dbReference type="GeneCards" id="CYP2A6"/>
<dbReference type="HGNC" id="HGNC:2610">
    <property type="gene designation" value="CYP2A6"/>
</dbReference>
<dbReference type="HPA" id="ENSG00000255974">
    <property type="expression patterns" value="Tissue enriched (liver)"/>
</dbReference>
<dbReference type="MalaCards" id="CYP2A6"/>
<dbReference type="MIM" id="122720">
    <property type="type" value="gene+phenotype"/>
</dbReference>
<dbReference type="neXtProt" id="NX_P11509"/>
<dbReference type="OpenTargets" id="ENSG00000255974"/>
<dbReference type="Orphanet" id="529831">
    <property type="disease" value="Letrozole toxicity"/>
</dbReference>
<dbReference type="PharmGKB" id="PA121"/>
<dbReference type="VEuPathDB" id="HostDB:ENSG00000255974"/>
<dbReference type="eggNOG" id="KOG0156">
    <property type="taxonomic scope" value="Eukaryota"/>
</dbReference>
<dbReference type="GeneTree" id="ENSGT00940000154117"/>
<dbReference type="InParanoid" id="P11509"/>
<dbReference type="OMA" id="KCPGINL"/>
<dbReference type="OrthoDB" id="2789670at2759"/>
<dbReference type="PAN-GO" id="P11509">
    <property type="GO annotations" value="9 GO annotations based on evolutionary models"/>
</dbReference>
<dbReference type="PhylomeDB" id="P11509"/>
<dbReference type="TreeFam" id="TF352043"/>
<dbReference type="BioCyc" id="MetaCyc:HS10343-MONOMER"/>
<dbReference type="BRENDA" id="1.14.14.1">
    <property type="organism ID" value="2681"/>
</dbReference>
<dbReference type="PathwayCommons" id="P11509"/>
<dbReference type="Reactome" id="R-HSA-211981">
    <property type="pathway name" value="Xenobiotics"/>
</dbReference>
<dbReference type="Reactome" id="R-HSA-211999">
    <property type="pathway name" value="CYP2E1 reactions"/>
</dbReference>
<dbReference type="SABIO-RK" id="P11509"/>
<dbReference type="SignaLink" id="P11509"/>
<dbReference type="BioGRID-ORCS" id="1548">
    <property type="hits" value="8 hits in 1077 CRISPR screens"/>
</dbReference>
<dbReference type="ChiTaRS" id="CYP2A6">
    <property type="organism name" value="human"/>
</dbReference>
<dbReference type="EvolutionaryTrace" id="P11509"/>
<dbReference type="GeneWiki" id="CYP2A6"/>
<dbReference type="GenomeRNAi" id="1548"/>
<dbReference type="Pharos" id="P11509">
    <property type="development level" value="Tchem"/>
</dbReference>
<dbReference type="PRO" id="PR:P11509"/>
<dbReference type="Proteomes" id="UP000005640">
    <property type="component" value="Chromosome 19"/>
</dbReference>
<dbReference type="RNAct" id="P11509">
    <property type="molecule type" value="protein"/>
</dbReference>
<dbReference type="Bgee" id="ENSG00000255974">
    <property type="expression patterns" value="Expressed in right lobe of liver and 149 other cell types or tissues"/>
</dbReference>
<dbReference type="ExpressionAtlas" id="P11509">
    <property type="expression patterns" value="baseline and differential"/>
</dbReference>
<dbReference type="GO" id="GO:0005737">
    <property type="term" value="C:cytoplasm"/>
    <property type="evidence" value="ECO:0000318"/>
    <property type="project" value="GO_Central"/>
</dbReference>
<dbReference type="GO" id="GO:0005881">
    <property type="term" value="C:cytoplasmic microtubule"/>
    <property type="evidence" value="ECO:0000314"/>
    <property type="project" value="UniProtKB"/>
</dbReference>
<dbReference type="GO" id="GO:0005789">
    <property type="term" value="C:endoplasmic reticulum membrane"/>
    <property type="evidence" value="ECO:0000304"/>
    <property type="project" value="Reactome"/>
</dbReference>
<dbReference type="GO" id="GO:0043231">
    <property type="term" value="C:intracellular membrane-bounded organelle"/>
    <property type="evidence" value="ECO:0000318"/>
    <property type="project" value="GO_Central"/>
</dbReference>
<dbReference type="GO" id="GO:0008392">
    <property type="term" value="F:arachidonate epoxygenase activity"/>
    <property type="evidence" value="ECO:0000318"/>
    <property type="project" value="GO_Central"/>
</dbReference>
<dbReference type="GO" id="GO:0008389">
    <property type="term" value="F:coumarin 7-hydroxylase activity"/>
    <property type="evidence" value="ECO:0000314"/>
    <property type="project" value="UniProtKB"/>
</dbReference>
<dbReference type="GO" id="GO:0019899">
    <property type="term" value="F:enzyme binding"/>
    <property type="evidence" value="ECO:0000353"/>
    <property type="project" value="BHF-UCL"/>
</dbReference>
<dbReference type="GO" id="GO:0020037">
    <property type="term" value="F:heme binding"/>
    <property type="evidence" value="ECO:0000314"/>
    <property type="project" value="UniProtKB"/>
</dbReference>
<dbReference type="GO" id="GO:0005506">
    <property type="term" value="F:iron ion binding"/>
    <property type="evidence" value="ECO:0007669"/>
    <property type="project" value="InterPro"/>
</dbReference>
<dbReference type="GO" id="GO:0016712">
    <property type="term" value="F:oxidoreductase activity, acting on paired donors, with incorporation or reduction of molecular oxygen, reduced flavin or flavoprotein as one donor, and incorporation of one atom of oxygen"/>
    <property type="evidence" value="ECO:0000318"/>
    <property type="project" value="GO_Central"/>
</dbReference>
<dbReference type="GO" id="GO:0046226">
    <property type="term" value="P:coumarin catabolic process"/>
    <property type="evidence" value="ECO:0000314"/>
    <property type="project" value="BHF-UCL"/>
</dbReference>
<dbReference type="GO" id="GO:0009804">
    <property type="term" value="P:coumarin metabolic process"/>
    <property type="evidence" value="ECO:0000314"/>
    <property type="project" value="BHF-UCL"/>
</dbReference>
<dbReference type="GO" id="GO:0019373">
    <property type="term" value="P:epoxygenase P450 pathway"/>
    <property type="evidence" value="ECO:0000318"/>
    <property type="project" value="GO_Central"/>
</dbReference>
<dbReference type="GO" id="GO:0008202">
    <property type="term" value="P:steroid metabolic process"/>
    <property type="evidence" value="ECO:0000315"/>
    <property type="project" value="BHF-UCL"/>
</dbReference>
<dbReference type="GO" id="GO:0042178">
    <property type="term" value="P:xenobiotic catabolic process"/>
    <property type="evidence" value="ECO:0000314"/>
    <property type="project" value="BHF-UCL"/>
</dbReference>
<dbReference type="GO" id="GO:0006805">
    <property type="term" value="P:xenobiotic metabolic process"/>
    <property type="evidence" value="ECO:0000314"/>
    <property type="project" value="BHF-UCL"/>
</dbReference>
<dbReference type="CDD" id="cd20668">
    <property type="entry name" value="CYP2A"/>
    <property type="match status" value="1"/>
</dbReference>
<dbReference type="FunFam" id="1.10.630.10:FF:000238">
    <property type="entry name" value="Cytochrome P450 2A6"/>
    <property type="match status" value="1"/>
</dbReference>
<dbReference type="Gene3D" id="1.10.630.10">
    <property type="entry name" value="Cytochrome P450"/>
    <property type="match status" value="1"/>
</dbReference>
<dbReference type="InterPro" id="IPR001128">
    <property type="entry name" value="Cyt_P450"/>
</dbReference>
<dbReference type="InterPro" id="IPR017972">
    <property type="entry name" value="Cyt_P450_CS"/>
</dbReference>
<dbReference type="InterPro" id="IPR002401">
    <property type="entry name" value="Cyt_P450_E_grp-I"/>
</dbReference>
<dbReference type="InterPro" id="IPR008067">
    <property type="entry name" value="Cyt_P450_E_grp-I_CYP2A-like"/>
</dbReference>
<dbReference type="InterPro" id="IPR036396">
    <property type="entry name" value="Cyt_P450_sf"/>
</dbReference>
<dbReference type="InterPro" id="IPR050182">
    <property type="entry name" value="Cytochrome_P450_fam2"/>
</dbReference>
<dbReference type="PANTHER" id="PTHR24300:SF180">
    <property type="entry name" value="CYTOCHROME P450 2A6"/>
    <property type="match status" value="1"/>
</dbReference>
<dbReference type="PANTHER" id="PTHR24300">
    <property type="entry name" value="CYTOCHROME P450 508A4-RELATED"/>
    <property type="match status" value="1"/>
</dbReference>
<dbReference type="Pfam" id="PF00067">
    <property type="entry name" value="p450"/>
    <property type="match status" value="1"/>
</dbReference>
<dbReference type="PRINTS" id="PR00463">
    <property type="entry name" value="EP450I"/>
</dbReference>
<dbReference type="PRINTS" id="PR01684">
    <property type="entry name" value="EP450ICYP2A"/>
</dbReference>
<dbReference type="PRINTS" id="PR00385">
    <property type="entry name" value="P450"/>
</dbReference>
<dbReference type="SUPFAM" id="SSF48264">
    <property type="entry name" value="Cytochrome P450"/>
    <property type="match status" value="1"/>
</dbReference>
<dbReference type="PROSITE" id="PS00086">
    <property type="entry name" value="CYTOCHROME_P450"/>
    <property type="match status" value="1"/>
</dbReference>
<gene>
    <name type="primary">CYP2A6</name>
    <name type="synonym">CYP2A3</name>
</gene>